<feature type="chain" id="PRO_0000291998" description="Tetratricopeptide repeat protein 39A">
    <location>
        <begin position="1"/>
        <end position="565"/>
    </location>
</feature>
<feature type="repeat" description="TPR 1">
    <location>
        <begin position="271"/>
        <end position="304"/>
    </location>
</feature>
<feature type="repeat" description="TPR 2">
    <location>
        <begin position="461"/>
        <end position="494"/>
    </location>
</feature>
<feature type="repeat" description="TPR 3">
    <location>
        <begin position="502"/>
        <end position="535"/>
    </location>
</feature>
<accession>A1A5Y5</accession>
<name>TT39A_DANRE</name>
<comment type="similarity">
    <text evidence="1">Belongs to the TTC39 family.</text>
</comment>
<evidence type="ECO:0000305" key="1"/>
<keyword id="KW-1185">Reference proteome</keyword>
<keyword id="KW-0677">Repeat</keyword>
<keyword id="KW-0802">TPR repeat</keyword>
<proteinExistence type="evidence at transcript level"/>
<dbReference type="EMBL" id="BC128859">
    <property type="protein sequence ID" value="AAI28860.1"/>
    <property type="molecule type" value="mRNA"/>
</dbReference>
<dbReference type="RefSeq" id="NP_001073553.1">
    <property type="nucleotide sequence ID" value="NM_001080084.1"/>
</dbReference>
<dbReference type="SMR" id="A1A5Y5"/>
<dbReference type="FunCoup" id="A1A5Y5">
    <property type="interactions" value="261"/>
</dbReference>
<dbReference type="STRING" id="7955.ENSDARP00000085503"/>
<dbReference type="PaxDb" id="7955-ENSDARP00000085503"/>
<dbReference type="PeptideAtlas" id="A1A5Y5"/>
<dbReference type="GeneID" id="790939"/>
<dbReference type="KEGG" id="dre:790939"/>
<dbReference type="AGR" id="ZFIN:ZDB-GENE-061215-116"/>
<dbReference type="ZFIN" id="ZDB-GENE-061215-116">
    <property type="gene designation" value="zgc:158403"/>
</dbReference>
<dbReference type="eggNOG" id="KOG3783">
    <property type="taxonomic scope" value="Eukaryota"/>
</dbReference>
<dbReference type="InParanoid" id="A1A5Y5"/>
<dbReference type="OrthoDB" id="43460at2759"/>
<dbReference type="PhylomeDB" id="A1A5Y5"/>
<dbReference type="PRO" id="PR:A1A5Y5"/>
<dbReference type="Proteomes" id="UP000000437">
    <property type="component" value="Chromosome 3"/>
</dbReference>
<dbReference type="Gene3D" id="1.25.40.10">
    <property type="entry name" value="Tetratricopeptide repeat domain"/>
    <property type="match status" value="1"/>
</dbReference>
<dbReference type="InterPro" id="IPR019412">
    <property type="entry name" value="Iml2/TPR_39"/>
</dbReference>
<dbReference type="InterPro" id="IPR011990">
    <property type="entry name" value="TPR-like_helical_dom_sf"/>
</dbReference>
<dbReference type="PANTHER" id="PTHR31859">
    <property type="entry name" value="TETRATRICOPEPTIDE REPEAT PROTEIN 39 FAMILY MEMBER"/>
    <property type="match status" value="1"/>
</dbReference>
<dbReference type="PANTHER" id="PTHR31859:SF7">
    <property type="entry name" value="TETRATRICOPEPTIDE REPEAT PROTEIN 39A"/>
    <property type="match status" value="1"/>
</dbReference>
<dbReference type="Pfam" id="PF10300">
    <property type="entry name" value="Iml2-TPR_39"/>
    <property type="match status" value="1"/>
</dbReference>
<dbReference type="SUPFAM" id="SSF81901">
    <property type="entry name" value="HCP-like"/>
    <property type="match status" value="1"/>
</dbReference>
<reference key="1">
    <citation type="submission" date="2006-12" db="EMBL/GenBank/DDBJ databases">
        <authorList>
            <consortium name="NIH - Zebrafish Gene Collection (ZGC) project"/>
        </authorList>
    </citation>
    <scope>NUCLEOTIDE SEQUENCE [LARGE SCALE MRNA]</scope>
    <source>
        <tissue>Kidney</tissue>
    </source>
</reference>
<sequence length="565" mass="64756">MSTGKNAPVTENSRQMSLQACLDECMEALDLFLNNHFNESLDKLRPRSKESMYHALIYATVLEMQAMMTFQQDDIVHAGNTMKSAQEVCQRFRKKSGGLGSRGANDDLSEEQIHAEVCYAECLLHRAALTFLQDENMVSFIKGGIKVRNSYLIYKELHAFIQSDATFKGPNHKHLEGGVSFGIGAFNLTLSLFPARILKLLEFAGFSGDKEFGISQLYTGATSHTLRSMLCALLLLCFYTFLSFILGTGEGEVEEAERLLKPFRLRYPRGAIFLFFAGRAEEIKGNIDEAVALFEDGCKAQQVWKQFHHMCYWELMWCFTFKRYWKMAYFYADLLSQESRWSKAMYVYMKAAYLSMLPDSESRPFGDNEVDLFRQVPTYKQKIAGKSPPTEKFAIRKARRYKASNPVRLPVPVLEMMYMWNGFSMISKQPELTEGMMETLLEAERTLRASPDNEYTVDDTCLIQLLKGLCLKNQGQMQAAEDCFNQVYISEKKLKFDHYLVPNALLEMSLLFIDTGRKEQAIKLLQKAKNNYKVYSMESRTQFRVHAALTKLKADVSDQEEITAL</sequence>
<gene>
    <name type="primary">ttc39a</name>
    <name type="ORF">zgc:158403</name>
</gene>
<organism>
    <name type="scientific">Danio rerio</name>
    <name type="common">Zebrafish</name>
    <name type="synonym">Brachydanio rerio</name>
    <dbReference type="NCBI Taxonomy" id="7955"/>
    <lineage>
        <taxon>Eukaryota</taxon>
        <taxon>Metazoa</taxon>
        <taxon>Chordata</taxon>
        <taxon>Craniata</taxon>
        <taxon>Vertebrata</taxon>
        <taxon>Euteleostomi</taxon>
        <taxon>Actinopterygii</taxon>
        <taxon>Neopterygii</taxon>
        <taxon>Teleostei</taxon>
        <taxon>Ostariophysi</taxon>
        <taxon>Cypriniformes</taxon>
        <taxon>Danionidae</taxon>
        <taxon>Danioninae</taxon>
        <taxon>Danio</taxon>
    </lineage>
</organism>
<protein>
    <recommendedName>
        <fullName>Tetratricopeptide repeat protein 39A</fullName>
        <shortName>TPR repeat protein 39A</shortName>
    </recommendedName>
</protein>